<evidence type="ECO:0000255" key="1">
    <source>
        <dbReference type="HAMAP-Rule" id="MF_00061"/>
    </source>
</evidence>
<name>ISPE_SHIBS</name>
<accession>Q31ZQ1</accession>
<proteinExistence type="inferred from homology"/>
<protein>
    <recommendedName>
        <fullName evidence="1">4-diphosphocytidyl-2-C-methyl-D-erythritol kinase</fullName>
        <shortName evidence="1">CMK</shortName>
        <ecNumber evidence="1">2.7.1.148</ecNumber>
    </recommendedName>
    <alternativeName>
        <fullName evidence="1">4-(cytidine-5'-diphospho)-2-C-methyl-D-erythritol kinase</fullName>
    </alternativeName>
</protein>
<keyword id="KW-0067">ATP-binding</keyword>
<keyword id="KW-0414">Isoprene biosynthesis</keyword>
<keyword id="KW-0418">Kinase</keyword>
<keyword id="KW-0547">Nucleotide-binding</keyword>
<keyword id="KW-0808">Transferase</keyword>
<organism>
    <name type="scientific">Shigella boydii serotype 4 (strain Sb227)</name>
    <dbReference type="NCBI Taxonomy" id="300268"/>
    <lineage>
        <taxon>Bacteria</taxon>
        <taxon>Pseudomonadati</taxon>
        <taxon>Pseudomonadota</taxon>
        <taxon>Gammaproteobacteria</taxon>
        <taxon>Enterobacterales</taxon>
        <taxon>Enterobacteriaceae</taxon>
        <taxon>Shigella</taxon>
    </lineage>
</organism>
<gene>
    <name evidence="1" type="primary">ispE</name>
    <name type="ordered locus">SBO_1859</name>
</gene>
<reference key="1">
    <citation type="journal article" date="2005" name="Nucleic Acids Res.">
        <title>Genome dynamics and diversity of Shigella species, the etiologic agents of bacillary dysentery.</title>
        <authorList>
            <person name="Yang F."/>
            <person name="Yang J."/>
            <person name="Zhang X."/>
            <person name="Chen L."/>
            <person name="Jiang Y."/>
            <person name="Yan Y."/>
            <person name="Tang X."/>
            <person name="Wang J."/>
            <person name="Xiong Z."/>
            <person name="Dong J."/>
            <person name="Xue Y."/>
            <person name="Zhu Y."/>
            <person name="Xu X."/>
            <person name="Sun L."/>
            <person name="Chen S."/>
            <person name="Nie H."/>
            <person name="Peng J."/>
            <person name="Xu J."/>
            <person name="Wang Y."/>
            <person name="Yuan Z."/>
            <person name="Wen Y."/>
            <person name="Yao Z."/>
            <person name="Shen Y."/>
            <person name="Qiang B."/>
            <person name="Hou Y."/>
            <person name="Yu J."/>
            <person name="Jin Q."/>
        </authorList>
    </citation>
    <scope>NUCLEOTIDE SEQUENCE [LARGE SCALE GENOMIC DNA]</scope>
    <source>
        <strain>Sb227</strain>
    </source>
</reference>
<feature type="chain" id="PRO_0000235129" description="4-diphosphocytidyl-2-C-methyl-D-erythritol kinase">
    <location>
        <begin position="1"/>
        <end position="283"/>
    </location>
</feature>
<feature type="active site" evidence="1">
    <location>
        <position position="10"/>
    </location>
</feature>
<feature type="active site" evidence="1">
    <location>
        <position position="141"/>
    </location>
</feature>
<feature type="binding site" evidence="1">
    <location>
        <begin position="99"/>
        <end position="109"/>
    </location>
    <ligand>
        <name>ATP</name>
        <dbReference type="ChEBI" id="CHEBI:30616"/>
    </ligand>
</feature>
<comment type="function">
    <text evidence="1">Catalyzes the phosphorylation of the position 2 hydroxy group of 4-diphosphocytidyl-2C-methyl-D-erythritol.</text>
</comment>
<comment type="catalytic activity">
    <reaction evidence="1">
        <text>4-CDP-2-C-methyl-D-erythritol + ATP = 4-CDP-2-C-methyl-D-erythritol 2-phosphate + ADP + H(+)</text>
        <dbReference type="Rhea" id="RHEA:18437"/>
        <dbReference type="ChEBI" id="CHEBI:15378"/>
        <dbReference type="ChEBI" id="CHEBI:30616"/>
        <dbReference type="ChEBI" id="CHEBI:57823"/>
        <dbReference type="ChEBI" id="CHEBI:57919"/>
        <dbReference type="ChEBI" id="CHEBI:456216"/>
        <dbReference type="EC" id="2.7.1.148"/>
    </reaction>
</comment>
<comment type="pathway">
    <text evidence="1">Isoprenoid biosynthesis; isopentenyl diphosphate biosynthesis via DXP pathway; isopentenyl diphosphate from 1-deoxy-D-xylulose 5-phosphate: step 3/6.</text>
</comment>
<comment type="subunit">
    <text evidence="1">Homodimer.</text>
</comment>
<comment type="similarity">
    <text evidence="1">Belongs to the GHMP kinase family. IspE subfamily.</text>
</comment>
<sequence length="283" mass="30953">MRTQWPSPAKLNLFLYITGQRADGYHTLQTLFQFLDYGDTISIELRDDGDIRLLTPVEGVEHEDNLIVRAARLLMKTAADSGRLPTGSGANISIDKRLPMGGGLGGGSSNAATVLVALNHLWQCGLSMDELAEMGLTLGADVPVFVRGHAAFAEGVGEILTPVDPPEKWYLVAHPGVSIPTPVIFKDPELPRNTPKRSIETLLKCEFSNDCEVIARKRFREVDAVLSWLLEYAPSRLTGTGACVFAEFDTESEARQVLEQAPEWLNGFVAKGVNLSPLHRAML</sequence>
<dbReference type="EC" id="2.7.1.148" evidence="1"/>
<dbReference type="EMBL" id="CP000036">
    <property type="protein sequence ID" value="ABB66457.1"/>
    <property type="molecule type" value="Genomic_DNA"/>
</dbReference>
<dbReference type="RefSeq" id="WP_001260333.1">
    <property type="nucleotide sequence ID" value="NC_007613.1"/>
</dbReference>
<dbReference type="SMR" id="Q31ZQ1"/>
<dbReference type="GeneID" id="93775273"/>
<dbReference type="KEGG" id="sbo:SBO_1859"/>
<dbReference type="HOGENOM" id="CLU_053057_3_0_6"/>
<dbReference type="UniPathway" id="UPA00056">
    <property type="reaction ID" value="UER00094"/>
</dbReference>
<dbReference type="Proteomes" id="UP000007067">
    <property type="component" value="Chromosome"/>
</dbReference>
<dbReference type="GO" id="GO:0050515">
    <property type="term" value="F:4-(cytidine 5'-diphospho)-2-C-methyl-D-erythritol kinase activity"/>
    <property type="evidence" value="ECO:0007669"/>
    <property type="project" value="UniProtKB-UniRule"/>
</dbReference>
<dbReference type="GO" id="GO:0005524">
    <property type="term" value="F:ATP binding"/>
    <property type="evidence" value="ECO:0007669"/>
    <property type="project" value="UniProtKB-UniRule"/>
</dbReference>
<dbReference type="GO" id="GO:0019288">
    <property type="term" value="P:isopentenyl diphosphate biosynthetic process, methylerythritol 4-phosphate pathway"/>
    <property type="evidence" value="ECO:0007669"/>
    <property type="project" value="UniProtKB-UniRule"/>
</dbReference>
<dbReference type="GO" id="GO:0016114">
    <property type="term" value="P:terpenoid biosynthetic process"/>
    <property type="evidence" value="ECO:0007669"/>
    <property type="project" value="InterPro"/>
</dbReference>
<dbReference type="FunFam" id="3.30.230.10:FF:000022">
    <property type="entry name" value="4-diphosphocytidyl-2-C-methyl-D-erythritol kinase"/>
    <property type="match status" value="1"/>
</dbReference>
<dbReference type="FunFam" id="3.30.70.890:FF:000004">
    <property type="entry name" value="4-diphosphocytidyl-2-C-methyl-D-erythritol kinase"/>
    <property type="match status" value="1"/>
</dbReference>
<dbReference type="Gene3D" id="3.30.230.10">
    <property type="match status" value="1"/>
</dbReference>
<dbReference type="Gene3D" id="3.30.70.890">
    <property type="entry name" value="GHMP kinase, C-terminal domain"/>
    <property type="match status" value="1"/>
</dbReference>
<dbReference type="HAMAP" id="MF_00061">
    <property type="entry name" value="IspE"/>
    <property type="match status" value="1"/>
</dbReference>
<dbReference type="InterPro" id="IPR013750">
    <property type="entry name" value="GHMP_kinase_C_dom"/>
</dbReference>
<dbReference type="InterPro" id="IPR036554">
    <property type="entry name" value="GHMP_kinase_C_sf"/>
</dbReference>
<dbReference type="InterPro" id="IPR006204">
    <property type="entry name" value="GHMP_kinase_N_dom"/>
</dbReference>
<dbReference type="InterPro" id="IPR004424">
    <property type="entry name" value="IspE"/>
</dbReference>
<dbReference type="InterPro" id="IPR020568">
    <property type="entry name" value="Ribosomal_Su5_D2-typ_SF"/>
</dbReference>
<dbReference type="InterPro" id="IPR014721">
    <property type="entry name" value="Ribsml_uS5_D2-typ_fold_subgr"/>
</dbReference>
<dbReference type="NCBIfam" id="TIGR00154">
    <property type="entry name" value="ispE"/>
    <property type="match status" value="1"/>
</dbReference>
<dbReference type="PANTHER" id="PTHR43527">
    <property type="entry name" value="4-DIPHOSPHOCYTIDYL-2-C-METHYL-D-ERYTHRITOL KINASE, CHLOROPLASTIC"/>
    <property type="match status" value="1"/>
</dbReference>
<dbReference type="PANTHER" id="PTHR43527:SF2">
    <property type="entry name" value="4-DIPHOSPHOCYTIDYL-2-C-METHYL-D-ERYTHRITOL KINASE, CHLOROPLASTIC"/>
    <property type="match status" value="1"/>
</dbReference>
<dbReference type="Pfam" id="PF08544">
    <property type="entry name" value="GHMP_kinases_C"/>
    <property type="match status" value="1"/>
</dbReference>
<dbReference type="Pfam" id="PF00288">
    <property type="entry name" value="GHMP_kinases_N"/>
    <property type="match status" value="1"/>
</dbReference>
<dbReference type="PIRSF" id="PIRSF010376">
    <property type="entry name" value="IspE"/>
    <property type="match status" value="1"/>
</dbReference>
<dbReference type="SUPFAM" id="SSF55060">
    <property type="entry name" value="GHMP Kinase, C-terminal domain"/>
    <property type="match status" value="1"/>
</dbReference>
<dbReference type="SUPFAM" id="SSF54211">
    <property type="entry name" value="Ribosomal protein S5 domain 2-like"/>
    <property type="match status" value="1"/>
</dbReference>